<name>METK_LIMRJ</name>
<sequence>MAERHLFTSESVSEGHPDKIADQISDAILDELLKKDPDSRVAVETSVTTGLVLVFGEVSTKAYVNIQQIVRDTIRKIGYTDGKYGFDADNCAVITAIDEQSPDIAQGVDDSLETREGEADPLDKIGAGDQGLMFGYATDETPEYMPLTLVLSHKLMRKIAQLRKDGVISYLRPDAKAEVTVEYDENDKPLRVDTVVLSTQHDPEVSLDQIKKDIKEQVIEAVIPAEYLDDQTKYFINPTGRFVIGGPQGDAGLTGRKIIVDTYGGAAHHGGGAFSGKDATKVDRSASYAARYIAKNIVAAGYAKKAEIQVAYAIGVAEPVSIMINTYGTGTRSEEELIAAVRKAFDLRPAGIIEMLDLKRPIYKQTAAYGHFGRTDVDLPWEHLDKVDELKEILG</sequence>
<evidence type="ECO:0000255" key="1">
    <source>
        <dbReference type="HAMAP-Rule" id="MF_00086"/>
    </source>
</evidence>
<protein>
    <recommendedName>
        <fullName evidence="1">S-adenosylmethionine synthase</fullName>
        <shortName evidence="1">AdoMet synthase</shortName>
        <ecNumber evidence="1">2.5.1.6</ecNumber>
    </recommendedName>
    <alternativeName>
        <fullName evidence="1">MAT</fullName>
    </alternativeName>
    <alternativeName>
        <fullName evidence="1">Methionine adenosyltransferase</fullName>
    </alternativeName>
</protein>
<organism>
    <name type="scientific">Limosilactobacillus reuteri subsp. reuteri (strain JCM 1112)</name>
    <name type="common">Lactobacillus reuteri</name>
    <dbReference type="NCBI Taxonomy" id="557433"/>
    <lineage>
        <taxon>Bacteria</taxon>
        <taxon>Bacillati</taxon>
        <taxon>Bacillota</taxon>
        <taxon>Bacilli</taxon>
        <taxon>Lactobacillales</taxon>
        <taxon>Lactobacillaceae</taxon>
        <taxon>Limosilactobacillus</taxon>
    </lineage>
</organism>
<proteinExistence type="inferred from homology"/>
<keyword id="KW-0067">ATP-binding</keyword>
<keyword id="KW-0963">Cytoplasm</keyword>
<keyword id="KW-0460">Magnesium</keyword>
<keyword id="KW-0479">Metal-binding</keyword>
<keyword id="KW-0547">Nucleotide-binding</keyword>
<keyword id="KW-0554">One-carbon metabolism</keyword>
<keyword id="KW-0630">Potassium</keyword>
<keyword id="KW-0808">Transferase</keyword>
<comment type="function">
    <text evidence="1">Catalyzes the formation of S-adenosylmethionine (AdoMet) from methionine and ATP. The overall synthetic reaction is composed of two sequential steps, AdoMet formation and the subsequent tripolyphosphate hydrolysis which occurs prior to release of AdoMet from the enzyme.</text>
</comment>
<comment type="catalytic activity">
    <reaction evidence="1">
        <text>L-methionine + ATP + H2O = S-adenosyl-L-methionine + phosphate + diphosphate</text>
        <dbReference type="Rhea" id="RHEA:21080"/>
        <dbReference type="ChEBI" id="CHEBI:15377"/>
        <dbReference type="ChEBI" id="CHEBI:30616"/>
        <dbReference type="ChEBI" id="CHEBI:33019"/>
        <dbReference type="ChEBI" id="CHEBI:43474"/>
        <dbReference type="ChEBI" id="CHEBI:57844"/>
        <dbReference type="ChEBI" id="CHEBI:59789"/>
        <dbReference type="EC" id="2.5.1.6"/>
    </reaction>
</comment>
<comment type="cofactor">
    <cofactor evidence="1">
        <name>Mg(2+)</name>
        <dbReference type="ChEBI" id="CHEBI:18420"/>
    </cofactor>
    <text evidence="1">Binds 2 divalent ions per subunit.</text>
</comment>
<comment type="cofactor">
    <cofactor evidence="1">
        <name>K(+)</name>
        <dbReference type="ChEBI" id="CHEBI:29103"/>
    </cofactor>
    <text evidence="1">Binds 1 potassium ion per subunit.</text>
</comment>
<comment type="pathway">
    <text evidence="1">Amino-acid biosynthesis; S-adenosyl-L-methionine biosynthesis; S-adenosyl-L-methionine from L-methionine: step 1/1.</text>
</comment>
<comment type="subunit">
    <text evidence="1">Homotetramer; dimer of dimers.</text>
</comment>
<comment type="subcellular location">
    <subcellularLocation>
        <location evidence="1">Cytoplasm</location>
    </subcellularLocation>
</comment>
<comment type="similarity">
    <text evidence="1">Belongs to the AdoMet synthase family.</text>
</comment>
<accession>B2G8G3</accession>
<gene>
    <name evidence="1" type="primary">metK</name>
    <name type="ordered locus">LAR_1229</name>
</gene>
<feature type="chain" id="PRO_1000093058" description="S-adenosylmethionine synthase">
    <location>
        <begin position="1"/>
        <end position="395"/>
    </location>
</feature>
<feature type="region of interest" description="Flexible loop" evidence="1">
    <location>
        <begin position="100"/>
        <end position="110"/>
    </location>
</feature>
<feature type="binding site" description="in other chain" evidence="1">
    <location>
        <position position="16"/>
    </location>
    <ligand>
        <name>ATP</name>
        <dbReference type="ChEBI" id="CHEBI:30616"/>
        <note>ligand shared between two neighboring subunits</note>
    </ligand>
</feature>
<feature type="binding site" evidence="1">
    <location>
        <position position="18"/>
    </location>
    <ligand>
        <name>Mg(2+)</name>
        <dbReference type="ChEBI" id="CHEBI:18420"/>
    </ligand>
</feature>
<feature type="binding site" evidence="1">
    <location>
        <position position="44"/>
    </location>
    <ligand>
        <name>K(+)</name>
        <dbReference type="ChEBI" id="CHEBI:29103"/>
    </ligand>
</feature>
<feature type="binding site" description="in other chain" evidence="1">
    <location>
        <position position="57"/>
    </location>
    <ligand>
        <name>L-methionine</name>
        <dbReference type="ChEBI" id="CHEBI:57844"/>
        <note>ligand shared between two neighboring subunits</note>
    </ligand>
</feature>
<feature type="binding site" description="in other chain" evidence="1">
    <location>
        <position position="100"/>
    </location>
    <ligand>
        <name>L-methionine</name>
        <dbReference type="ChEBI" id="CHEBI:57844"/>
        <note>ligand shared between two neighboring subunits</note>
    </ligand>
</feature>
<feature type="binding site" description="in other chain" evidence="1">
    <location>
        <begin position="174"/>
        <end position="176"/>
    </location>
    <ligand>
        <name>ATP</name>
        <dbReference type="ChEBI" id="CHEBI:30616"/>
        <note>ligand shared between two neighboring subunits</note>
    </ligand>
</feature>
<feature type="binding site" description="in other chain" evidence="1">
    <location>
        <begin position="241"/>
        <end position="242"/>
    </location>
    <ligand>
        <name>ATP</name>
        <dbReference type="ChEBI" id="CHEBI:30616"/>
        <note>ligand shared between two neighboring subunits</note>
    </ligand>
</feature>
<feature type="binding site" evidence="1">
    <location>
        <position position="250"/>
    </location>
    <ligand>
        <name>ATP</name>
        <dbReference type="ChEBI" id="CHEBI:30616"/>
        <note>ligand shared between two neighboring subunits</note>
    </ligand>
</feature>
<feature type="binding site" evidence="1">
    <location>
        <position position="250"/>
    </location>
    <ligand>
        <name>L-methionine</name>
        <dbReference type="ChEBI" id="CHEBI:57844"/>
        <note>ligand shared between two neighboring subunits</note>
    </ligand>
</feature>
<feature type="binding site" description="in other chain" evidence="1">
    <location>
        <begin position="256"/>
        <end position="257"/>
    </location>
    <ligand>
        <name>ATP</name>
        <dbReference type="ChEBI" id="CHEBI:30616"/>
        <note>ligand shared between two neighboring subunits</note>
    </ligand>
</feature>
<feature type="binding site" evidence="1">
    <location>
        <position position="273"/>
    </location>
    <ligand>
        <name>ATP</name>
        <dbReference type="ChEBI" id="CHEBI:30616"/>
        <note>ligand shared between two neighboring subunits</note>
    </ligand>
</feature>
<feature type="binding site" evidence="1">
    <location>
        <position position="277"/>
    </location>
    <ligand>
        <name>ATP</name>
        <dbReference type="ChEBI" id="CHEBI:30616"/>
        <note>ligand shared between two neighboring subunits</note>
    </ligand>
</feature>
<feature type="binding site" description="in other chain" evidence="1">
    <location>
        <position position="281"/>
    </location>
    <ligand>
        <name>L-methionine</name>
        <dbReference type="ChEBI" id="CHEBI:57844"/>
        <note>ligand shared between two neighboring subunits</note>
    </ligand>
</feature>
<reference key="1">
    <citation type="journal article" date="2008" name="DNA Res.">
        <title>Comparative genome analysis of Lactobacillus reuteri and Lactobacillus fermentum reveal a genomic island for reuterin and cobalamin production.</title>
        <authorList>
            <person name="Morita H."/>
            <person name="Toh H."/>
            <person name="Fukuda S."/>
            <person name="Horikawa H."/>
            <person name="Oshima K."/>
            <person name="Suzuki T."/>
            <person name="Murakami M."/>
            <person name="Hisamatsu S."/>
            <person name="Kato Y."/>
            <person name="Takizawa T."/>
            <person name="Fukuoka H."/>
            <person name="Yoshimura T."/>
            <person name="Itoh K."/>
            <person name="O'Sullivan D.J."/>
            <person name="McKay L.L."/>
            <person name="Ohno H."/>
            <person name="Kikuchi J."/>
            <person name="Masaoka T."/>
            <person name="Hattori M."/>
        </authorList>
    </citation>
    <scope>NUCLEOTIDE SEQUENCE [LARGE SCALE GENOMIC DNA]</scope>
    <source>
        <strain>JCM 1112</strain>
    </source>
</reference>
<dbReference type="EC" id="2.5.1.6" evidence="1"/>
<dbReference type="EMBL" id="AP007281">
    <property type="protein sequence ID" value="BAG25745.1"/>
    <property type="molecule type" value="Genomic_DNA"/>
</dbReference>
<dbReference type="RefSeq" id="WP_003668547.1">
    <property type="nucleotide sequence ID" value="NC_010609.1"/>
</dbReference>
<dbReference type="SMR" id="B2G8G3"/>
<dbReference type="KEGG" id="lrf:LAR_1229"/>
<dbReference type="HOGENOM" id="CLU_041802_1_1_9"/>
<dbReference type="UniPathway" id="UPA00315">
    <property type="reaction ID" value="UER00080"/>
</dbReference>
<dbReference type="GO" id="GO:0005737">
    <property type="term" value="C:cytoplasm"/>
    <property type="evidence" value="ECO:0007669"/>
    <property type="project" value="UniProtKB-SubCell"/>
</dbReference>
<dbReference type="GO" id="GO:0005524">
    <property type="term" value="F:ATP binding"/>
    <property type="evidence" value="ECO:0007669"/>
    <property type="project" value="UniProtKB-UniRule"/>
</dbReference>
<dbReference type="GO" id="GO:0000287">
    <property type="term" value="F:magnesium ion binding"/>
    <property type="evidence" value="ECO:0007669"/>
    <property type="project" value="UniProtKB-UniRule"/>
</dbReference>
<dbReference type="GO" id="GO:0004478">
    <property type="term" value="F:methionine adenosyltransferase activity"/>
    <property type="evidence" value="ECO:0007669"/>
    <property type="project" value="UniProtKB-UniRule"/>
</dbReference>
<dbReference type="GO" id="GO:0006730">
    <property type="term" value="P:one-carbon metabolic process"/>
    <property type="evidence" value="ECO:0007669"/>
    <property type="project" value="UniProtKB-KW"/>
</dbReference>
<dbReference type="GO" id="GO:0006556">
    <property type="term" value="P:S-adenosylmethionine biosynthetic process"/>
    <property type="evidence" value="ECO:0007669"/>
    <property type="project" value="UniProtKB-UniRule"/>
</dbReference>
<dbReference type="CDD" id="cd18079">
    <property type="entry name" value="S-AdoMet_synt"/>
    <property type="match status" value="1"/>
</dbReference>
<dbReference type="FunFam" id="3.30.300.10:FF:000003">
    <property type="entry name" value="S-adenosylmethionine synthase"/>
    <property type="match status" value="1"/>
</dbReference>
<dbReference type="FunFam" id="3.30.300.10:FF:000004">
    <property type="entry name" value="S-adenosylmethionine synthase"/>
    <property type="match status" value="1"/>
</dbReference>
<dbReference type="FunFam" id="3.30.300.10:FF:000011">
    <property type="entry name" value="S-adenosylmethionine synthase"/>
    <property type="match status" value="1"/>
</dbReference>
<dbReference type="Gene3D" id="3.30.300.10">
    <property type="match status" value="3"/>
</dbReference>
<dbReference type="HAMAP" id="MF_00086">
    <property type="entry name" value="S_AdoMet_synth1"/>
    <property type="match status" value="1"/>
</dbReference>
<dbReference type="InterPro" id="IPR022631">
    <property type="entry name" value="ADOMET_SYNTHASE_CS"/>
</dbReference>
<dbReference type="InterPro" id="IPR022630">
    <property type="entry name" value="S-AdoMet_synt_C"/>
</dbReference>
<dbReference type="InterPro" id="IPR022629">
    <property type="entry name" value="S-AdoMet_synt_central"/>
</dbReference>
<dbReference type="InterPro" id="IPR022628">
    <property type="entry name" value="S-AdoMet_synt_N"/>
</dbReference>
<dbReference type="InterPro" id="IPR002133">
    <property type="entry name" value="S-AdoMet_synthetase"/>
</dbReference>
<dbReference type="InterPro" id="IPR022636">
    <property type="entry name" value="S-AdoMet_synthetase_sfam"/>
</dbReference>
<dbReference type="NCBIfam" id="TIGR01034">
    <property type="entry name" value="metK"/>
    <property type="match status" value="1"/>
</dbReference>
<dbReference type="PANTHER" id="PTHR11964">
    <property type="entry name" value="S-ADENOSYLMETHIONINE SYNTHETASE"/>
    <property type="match status" value="1"/>
</dbReference>
<dbReference type="Pfam" id="PF02773">
    <property type="entry name" value="S-AdoMet_synt_C"/>
    <property type="match status" value="1"/>
</dbReference>
<dbReference type="Pfam" id="PF02772">
    <property type="entry name" value="S-AdoMet_synt_M"/>
    <property type="match status" value="1"/>
</dbReference>
<dbReference type="Pfam" id="PF00438">
    <property type="entry name" value="S-AdoMet_synt_N"/>
    <property type="match status" value="1"/>
</dbReference>
<dbReference type="PIRSF" id="PIRSF000497">
    <property type="entry name" value="MAT"/>
    <property type="match status" value="1"/>
</dbReference>
<dbReference type="SUPFAM" id="SSF55973">
    <property type="entry name" value="S-adenosylmethionine synthetase"/>
    <property type="match status" value="3"/>
</dbReference>
<dbReference type="PROSITE" id="PS00376">
    <property type="entry name" value="ADOMET_SYNTHASE_1"/>
    <property type="match status" value="1"/>
</dbReference>
<dbReference type="PROSITE" id="PS00377">
    <property type="entry name" value="ADOMET_SYNTHASE_2"/>
    <property type="match status" value="1"/>
</dbReference>